<protein>
    <recommendedName>
        <fullName evidence="1">tRNA(Met) cytidine acetate ligase</fullName>
        <ecNumber evidence="1">6.3.4.-</ecNumber>
    </recommendedName>
</protein>
<accession>Q5HQ41</accession>
<evidence type="ECO:0000255" key="1">
    <source>
        <dbReference type="HAMAP-Rule" id="MF_01539"/>
    </source>
</evidence>
<gene>
    <name evidence="1" type="primary">tmcAL</name>
    <name type="ordered locus">SERP0716</name>
</gene>
<organism>
    <name type="scientific">Staphylococcus epidermidis (strain ATCC 35984 / DSM 28319 / BCRC 17069 / CCUG 31568 / BM 3577 / RP62A)</name>
    <dbReference type="NCBI Taxonomy" id="176279"/>
    <lineage>
        <taxon>Bacteria</taxon>
        <taxon>Bacillati</taxon>
        <taxon>Bacillota</taxon>
        <taxon>Bacilli</taxon>
        <taxon>Bacillales</taxon>
        <taxon>Staphylococcaceae</taxon>
        <taxon>Staphylococcus</taxon>
    </lineage>
</organism>
<proteinExistence type="inferred from homology"/>
<dbReference type="EC" id="6.3.4.-" evidence="1"/>
<dbReference type="EMBL" id="CP000029">
    <property type="protein sequence ID" value="AAW54074.1"/>
    <property type="molecule type" value="Genomic_DNA"/>
</dbReference>
<dbReference type="RefSeq" id="WP_002486281.1">
    <property type="nucleotide sequence ID" value="NC_002976.3"/>
</dbReference>
<dbReference type="SMR" id="Q5HQ41"/>
<dbReference type="STRING" id="176279.SERP0716"/>
<dbReference type="KEGG" id="ser:SERP0716"/>
<dbReference type="eggNOG" id="COG1323">
    <property type="taxonomic scope" value="Bacteria"/>
</dbReference>
<dbReference type="HOGENOM" id="CLU_038915_0_2_9"/>
<dbReference type="Proteomes" id="UP000000531">
    <property type="component" value="Chromosome"/>
</dbReference>
<dbReference type="GO" id="GO:0005737">
    <property type="term" value="C:cytoplasm"/>
    <property type="evidence" value="ECO:0007669"/>
    <property type="project" value="UniProtKB-SubCell"/>
</dbReference>
<dbReference type="GO" id="GO:0005524">
    <property type="term" value="F:ATP binding"/>
    <property type="evidence" value="ECO:0007669"/>
    <property type="project" value="UniProtKB-KW"/>
</dbReference>
<dbReference type="GO" id="GO:0016879">
    <property type="term" value="F:ligase activity, forming carbon-nitrogen bonds"/>
    <property type="evidence" value="ECO:0007669"/>
    <property type="project" value="UniProtKB-UniRule"/>
</dbReference>
<dbReference type="GO" id="GO:0000049">
    <property type="term" value="F:tRNA binding"/>
    <property type="evidence" value="ECO:0007669"/>
    <property type="project" value="UniProtKB-KW"/>
</dbReference>
<dbReference type="GO" id="GO:0006400">
    <property type="term" value="P:tRNA modification"/>
    <property type="evidence" value="ECO:0007669"/>
    <property type="project" value="UniProtKB-UniRule"/>
</dbReference>
<dbReference type="Gene3D" id="3.40.50.620">
    <property type="entry name" value="HUPs"/>
    <property type="match status" value="1"/>
</dbReference>
<dbReference type="HAMAP" id="MF_01539">
    <property type="entry name" value="TmcAL"/>
    <property type="match status" value="1"/>
</dbReference>
<dbReference type="InterPro" id="IPR014729">
    <property type="entry name" value="Rossmann-like_a/b/a_fold"/>
</dbReference>
<dbReference type="InterPro" id="IPR008513">
    <property type="entry name" value="tRNA(Met)_cyd_acetate_ligase"/>
</dbReference>
<dbReference type="NCBIfam" id="NF010191">
    <property type="entry name" value="PRK13670.1"/>
    <property type="match status" value="1"/>
</dbReference>
<dbReference type="PANTHER" id="PTHR37825">
    <property type="entry name" value="TRNA(MET) CYTIDINE ACETATE LIGASE"/>
    <property type="match status" value="1"/>
</dbReference>
<dbReference type="PANTHER" id="PTHR37825:SF1">
    <property type="entry name" value="TRNA(MET) CYTIDINE ACETATE LIGASE"/>
    <property type="match status" value="1"/>
</dbReference>
<dbReference type="Pfam" id="PF05636">
    <property type="entry name" value="HIGH_NTase1"/>
    <property type="match status" value="1"/>
</dbReference>
<dbReference type="SUPFAM" id="SSF52374">
    <property type="entry name" value="Nucleotidylyl transferase"/>
    <property type="match status" value="1"/>
</dbReference>
<sequence length="377" mass="43303">MKSVGLITEYNPFHNGHLFHATLSKQRSETNVTIAIMSGNFVMRGEPAIYHKFKRTEMALSAVDLVVELPLIGSLSSSDTFAEIAIKTAQYLDIDIISFGSESASLKDLQYLATQMIDYEKHPDFKEKLKQGKSYPRILSELTHNDTLLQSPNNILGISYLKAMQQFAPHMSALTIKREGSLHHQKVIDHHHFASGTSIRRSLMNDNVDWKNVVPNQIQSLYCKPHTTVEDTFPFIKHQLITQPKESLHSIYTINEGFENRLQTMIHRSDSFESLLSNLNTKRYTQTYIQRVLMNVLLNITKDDVNKEINAVRVLGMSEKGRSYLKYLKANYPNRHYITNVNQKTAHYFKNEIKATHVYNLLSNQSQTDFNTPLVRI</sequence>
<keyword id="KW-0067">ATP-binding</keyword>
<keyword id="KW-0963">Cytoplasm</keyword>
<keyword id="KW-0436">Ligase</keyword>
<keyword id="KW-0547">Nucleotide-binding</keyword>
<keyword id="KW-1185">Reference proteome</keyword>
<keyword id="KW-0694">RNA-binding</keyword>
<keyword id="KW-0819">tRNA processing</keyword>
<keyword id="KW-0820">tRNA-binding</keyword>
<name>TMCAL_STAEQ</name>
<reference key="1">
    <citation type="journal article" date="2005" name="J. Bacteriol.">
        <title>Insights on evolution of virulence and resistance from the complete genome analysis of an early methicillin-resistant Staphylococcus aureus strain and a biofilm-producing methicillin-resistant Staphylococcus epidermidis strain.</title>
        <authorList>
            <person name="Gill S.R."/>
            <person name="Fouts D.E."/>
            <person name="Archer G.L."/>
            <person name="Mongodin E.F."/>
            <person name="DeBoy R.T."/>
            <person name="Ravel J."/>
            <person name="Paulsen I.T."/>
            <person name="Kolonay J.F."/>
            <person name="Brinkac L.M."/>
            <person name="Beanan M.J."/>
            <person name="Dodson R.J."/>
            <person name="Daugherty S.C."/>
            <person name="Madupu R."/>
            <person name="Angiuoli S.V."/>
            <person name="Durkin A.S."/>
            <person name="Haft D.H."/>
            <person name="Vamathevan J.J."/>
            <person name="Khouri H."/>
            <person name="Utterback T.R."/>
            <person name="Lee C."/>
            <person name="Dimitrov G."/>
            <person name="Jiang L."/>
            <person name="Qin H."/>
            <person name="Weidman J."/>
            <person name="Tran K."/>
            <person name="Kang K.H."/>
            <person name="Hance I.R."/>
            <person name="Nelson K.E."/>
            <person name="Fraser C.M."/>
        </authorList>
    </citation>
    <scope>NUCLEOTIDE SEQUENCE [LARGE SCALE GENOMIC DNA]</scope>
    <source>
        <strain>ATCC 35984 / DSM 28319 / BCRC 17069 / CCUG 31568 / BM 3577 / RP62A</strain>
    </source>
</reference>
<feature type="chain" id="PRO_0000147185" description="tRNA(Met) cytidine acetate ligase">
    <location>
        <begin position="1"/>
        <end position="377"/>
    </location>
</feature>
<feature type="binding site" evidence="1">
    <location>
        <begin position="7"/>
        <end position="20"/>
    </location>
    <ligand>
        <name>ATP</name>
        <dbReference type="ChEBI" id="CHEBI:30616"/>
    </ligand>
</feature>
<feature type="binding site" evidence="1">
    <location>
        <position position="100"/>
    </location>
    <ligand>
        <name>ATP</name>
        <dbReference type="ChEBI" id="CHEBI:30616"/>
    </ligand>
</feature>
<feature type="binding site" evidence="1">
    <location>
        <position position="153"/>
    </location>
    <ligand>
        <name>ATP</name>
        <dbReference type="ChEBI" id="CHEBI:30616"/>
    </ligand>
</feature>
<feature type="binding site" evidence="1">
    <location>
        <position position="178"/>
    </location>
    <ligand>
        <name>ATP</name>
        <dbReference type="ChEBI" id="CHEBI:30616"/>
    </ligand>
</feature>
<comment type="function">
    <text evidence="1">Catalyzes the formation of N(4)-acetylcytidine (ac(4)C) at the wobble position of elongator tRNA(Met), using acetate and ATP as substrates. First activates an acetate ion to form acetyladenylate (Ac-AMP) and then transfers the acetyl group to tRNA to form ac(4)C34.</text>
</comment>
<comment type="catalytic activity">
    <reaction evidence="1">
        <text>cytidine(34) in elongator tRNA(Met) + acetate + ATP = N(4)-acetylcytidine(34) in elongator tRNA(Met) + AMP + diphosphate</text>
        <dbReference type="Rhea" id="RHEA:58144"/>
        <dbReference type="Rhea" id="RHEA-COMP:10693"/>
        <dbReference type="Rhea" id="RHEA-COMP:10694"/>
        <dbReference type="ChEBI" id="CHEBI:30089"/>
        <dbReference type="ChEBI" id="CHEBI:30616"/>
        <dbReference type="ChEBI" id="CHEBI:33019"/>
        <dbReference type="ChEBI" id="CHEBI:74900"/>
        <dbReference type="ChEBI" id="CHEBI:82748"/>
        <dbReference type="ChEBI" id="CHEBI:456215"/>
    </reaction>
</comment>
<comment type="subcellular location">
    <subcellularLocation>
        <location evidence="1">Cytoplasm</location>
    </subcellularLocation>
</comment>
<comment type="similarity">
    <text evidence="1">Belongs to the TmcAL family.</text>
</comment>